<accession>O74347</accession>
<organism>
    <name type="scientific">Schizosaccharomyces pombe (strain 972 / ATCC 24843)</name>
    <name type="common">Fission yeast</name>
    <dbReference type="NCBI Taxonomy" id="284812"/>
    <lineage>
        <taxon>Eukaryota</taxon>
        <taxon>Fungi</taxon>
        <taxon>Dikarya</taxon>
        <taxon>Ascomycota</taxon>
        <taxon>Taphrinomycotina</taxon>
        <taxon>Schizosaccharomycetes</taxon>
        <taxon>Schizosaccharomycetales</taxon>
        <taxon>Schizosaccharomycetaceae</taxon>
        <taxon>Schizosaccharomyces</taxon>
    </lineage>
</organism>
<keyword id="KW-0143">Chaperone</keyword>
<keyword id="KW-1015">Disulfide bond</keyword>
<keyword id="KW-0472">Membrane</keyword>
<keyword id="KW-0496">Mitochondrion</keyword>
<keyword id="KW-0999">Mitochondrion inner membrane</keyword>
<keyword id="KW-1185">Reference proteome</keyword>
<keyword id="KW-0677">Repeat</keyword>
<gene>
    <name type="primary">cmc1</name>
    <name type="ORF">SPBC21D10.07</name>
</gene>
<comment type="function">
    <text evidence="1">Required for mitochondrial cytochrome c oxidase (COX) assembly and respiration.</text>
</comment>
<comment type="subcellular location">
    <subcellularLocation>
        <location evidence="1">Mitochondrion inner membrane</location>
        <topology evidence="1">Peripheral membrane protein</topology>
        <orientation evidence="1">Intermembrane side</orientation>
    </subcellularLocation>
    <text evidence="1">Imported into the mitochondria via the mitochondrial mia40-erv1 machinery.</text>
</comment>
<comment type="domain">
    <text evidence="1">The twin Cx9C motifs are involved in the recognition by the mitochondrial mia40-erv1 disulfide relay system and the subsequent transfer of disulfide bonds by dithiol/disulfide exchange reactions to the newly imported protein.</text>
</comment>
<comment type="similarity">
    <text evidence="3">Belongs to the CMC family.</text>
</comment>
<name>COXM1_SCHPO</name>
<evidence type="ECO:0000250" key="1"/>
<evidence type="ECO:0000255" key="2">
    <source>
        <dbReference type="PROSITE-ProRule" id="PRU01150"/>
    </source>
</evidence>
<evidence type="ECO:0000305" key="3"/>
<protein>
    <recommendedName>
        <fullName>COX assembly mitochondrial protein 1</fullName>
    </recommendedName>
    <alternativeName>
        <fullName>Cx9C motif-containing protein 1</fullName>
    </alternativeName>
</protein>
<feature type="chain" id="PRO_0000192946" description="COX assembly mitochondrial protein 1">
    <location>
        <begin position="1"/>
        <end position="104"/>
    </location>
</feature>
<feature type="domain" description="CHCH" evidence="2">
    <location>
        <begin position="10"/>
        <end position="52"/>
    </location>
</feature>
<feature type="short sequence motif" description="Cx9C motif 1" evidence="2">
    <location>
        <begin position="13"/>
        <end position="23"/>
    </location>
</feature>
<feature type="short sequence motif" description="Cx9C motif 2" evidence="2">
    <location>
        <begin position="34"/>
        <end position="44"/>
    </location>
</feature>
<feature type="disulfide bond" evidence="2">
    <location>
        <begin position="13"/>
        <end position="44"/>
    </location>
</feature>
<feature type="disulfide bond" evidence="2">
    <location>
        <begin position="23"/>
        <end position="34"/>
    </location>
</feature>
<reference key="1">
    <citation type="journal article" date="2002" name="Nature">
        <title>The genome sequence of Schizosaccharomyces pombe.</title>
        <authorList>
            <person name="Wood V."/>
            <person name="Gwilliam R."/>
            <person name="Rajandream M.A."/>
            <person name="Lyne M.H."/>
            <person name="Lyne R."/>
            <person name="Stewart A."/>
            <person name="Sgouros J.G."/>
            <person name="Peat N."/>
            <person name="Hayles J."/>
            <person name="Baker S.G."/>
            <person name="Basham D."/>
            <person name="Bowman S."/>
            <person name="Brooks K."/>
            <person name="Brown D."/>
            <person name="Brown S."/>
            <person name="Chillingworth T."/>
            <person name="Churcher C.M."/>
            <person name="Collins M."/>
            <person name="Connor R."/>
            <person name="Cronin A."/>
            <person name="Davis P."/>
            <person name="Feltwell T."/>
            <person name="Fraser A."/>
            <person name="Gentles S."/>
            <person name="Goble A."/>
            <person name="Hamlin N."/>
            <person name="Harris D.E."/>
            <person name="Hidalgo J."/>
            <person name="Hodgson G."/>
            <person name="Holroyd S."/>
            <person name="Hornsby T."/>
            <person name="Howarth S."/>
            <person name="Huckle E.J."/>
            <person name="Hunt S."/>
            <person name="Jagels K."/>
            <person name="James K.D."/>
            <person name="Jones L."/>
            <person name="Jones M."/>
            <person name="Leather S."/>
            <person name="McDonald S."/>
            <person name="McLean J."/>
            <person name="Mooney P."/>
            <person name="Moule S."/>
            <person name="Mungall K.L."/>
            <person name="Murphy L.D."/>
            <person name="Niblett D."/>
            <person name="Odell C."/>
            <person name="Oliver K."/>
            <person name="O'Neil S."/>
            <person name="Pearson D."/>
            <person name="Quail M.A."/>
            <person name="Rabbinowitsch E."/>
            <person name="Rutherford K.M."/>
            <person name="Rutter S."/>
            <person name="Saunders D."/>
            <person name="Seeger K."/>
            <person name="Sharp S."/>
            <person name="Skelton J."/>
            <person name="Simmonds M.N."/>
            <person name="Squares R."/>
            <person name="Squares S."/>
            <person name="Stevens K."/>
            <person name="Taylor K."/>
            <person name="Taylor R.G."/>
            <person name="Tivey A."/>
            <person name="Walsh S.V."/>
            <person name="Warren T."/>
            <person name="Whitehead S."/>
            <person name="Woodward J.R."/>
            <person name="Volckaert G."/>
            <person name="Aert R."/>
            <person name="Robben J."/>
            <person name="Grymonprez B."/>
            <person name="Weltjens I."/>
            <person name="Vanstreels E."/>
            <person name="Rieger M."/>
            <person name="Schaefer M."/>
            <person name="Mueller-Auer S."/>
            <person name="Gabel C."/>
            <person name="Fuchs M."/>
            <person name="Duesterhoeft A."/>
            <person name="Fritzc C."/>
            <person name="Holzer E."/>
            <person name="Moestl D."/>
            <person name="Hilbert H."/>
            <person name="Borzym K."/>
            <person name="Langer I."/>
            <person name="Beck A."/>
            <person name="Lehrach H."/>
            <person name="Reinhardt R."/>
            <person name="Pohl T.M."/>
            <person name="Eger P."/>
            <person name="Zimmermann W."/>
            <person name="Wedler H."/>
            <person name="Wambutt R."/>
            <person name="Purnelle B."/>
            <person name="Goffeau A."/>
            <person name="Cadieu E."/>
            <person name="Dreano S."/>
            <person name="Gloux S."/>
            <person name="Lelaure V."/>
            <person name="Mottier S."/>
            <person name="Galibert F."/>
            <person name="Aves S.J."/>
            <person name="Xiang Z."/>
            <person name="Hunt C."/>
            <person name="Moore K."/>
            <person name="Hurst S.M."/>
            <person name="Lucas M."/>
            <person name="Rochet M."/>
            <person name="Gaillardin C."/>
            <person name="Tallada V.A."/>
            <person name="Garzon A."/>
            <person name="Thode G."/>
            <person name="Daga R.R."/>
            <person name="Cruzado L."/>
            <person name="Jimenez J."/>
            <person name="Sanchez M."/>
            <person name="del Rey F."/>
            <person name="Benito J."/>
            <person name="Dominguez A."/>
            <person name="Revuelta J.L."/>
            <person name="Moreno S."/>
            <person name="Armstrong J."/>
            <person name="Forsburg S.L."/>
            <person name="Cerutti L."/>
            <person name="Lowe T."/>
            <person name="McCombie W.R."/>
            <person name="Paulsen I."/>
            <person name="Potashkin J."/>
            <person name="Shpakovski G.V."/>
            <person name="Ussery D."/>
            <person name="Barrell B.G."/>
            <person name="Nurse P."/>
        </authorList>
    </citation>
    <scope>NUCLEOTIDE SEQUENCE [LARGE SCALE GENOMIC DNA]</scope>
    <source>
        <strain>972 / ATCC 24843</strain>
    </source>
</reference>
<dbReference type="EMBL" id="CU329671">
    <property type="protein sequence ID" value="CAA20763.1"/>
    <property type="molecule type" value="Genomic_DNA"/>
</dbReference>
<dbReference type="PIR" id="T11679">
    <property type="entry name" value="T11679"/>
</dbReference>
<dbReference type="RefSeq" id="NP_596006.1">
    <property type="nucleotide sequence ID" value="NM_001021914.2"/>
</dbReference>
<dbReference type="SMR" id="O74347"/>
<dbReference type="BioGRID" id="277014">
    <property type="interactions" value="2"/>
</dbReference>
<dbReference type="FunCoup" id="O74347">
    <property type="interactions" value="195"/>
</dbReference>
<dbReference type="PaxDb" id="4896-SPBC21D10.07.1"/>
<dbReference type="EnsemblFungi" id="SPBC21D10.07.1">
    <property type="protein sequence ID" value="SPBC21D10.07.1:pep"/>
    <property type="gene ID" value="SPBC21D10.07"/>
</dbReference>
<dbReference type="GeneID" id="2540486"/>
<dbReference type="KEGG" id="spo:2540486"/>
<dbReference type="PomBase" id="SPBC21D10.07">
    <property type="gene designation" value="cmc1"/>
</dbReference>
<dbReference type="VEuPathDB" id="FungiDB:SPBC21D10.07"/>
<dbReference type="eggNOG" id="KOG4148">
    <property type="taxonomic scope" value="Eukaryota"/>
</dbReference>
<dbReference type="HOGENOM" id="CLU_169286_3_1_1"/>
<dbReference type="InParanoid" id="O74347"/>
<dbReference type="PhylomeDB" id="O74347"/>
<dbReference type="PRO" id="PR:O74347"/>
<dbReference type="Proteomes" id="UP000002485">
    <property type="component" value="Chromosome II"/>
</dbReference>
<dbReference type="GO" id="GO:0031314">
    <property type="term" value="C:extrinsic component of mitochondrial inner membrane"/>
    <property type="evidence" value="ECO:0000266"/>
    <property type="project" value="PomBase"/>
</dbReference>
<dbReference type="GO" id="GO:0005758">
    <property type="term" value="C:mitochondrial intermembrane space"/>
    <property type="evidence" value="ECO:0000266"/>
    <property type="project" value="PomBase"/>
</dbReference>
<dbReference type="GO" id="GO:0005739">
    <property type="term" value="C:mitochondrion"/>
    <property type="evidence" value="ECO:0000318"/>
    <property type="project" value="GO_Central"/>
</dbReference>
<dbReference type="GO" id="GO:0005507">
    <property type="term" value="F:copper ion binding"/>
    <property type="evidence" value="ECO:0000266"/>
    <property type="project" value="PomBase"/>
</dbReference>
<dbReference type="GO" id="GO:0033617">
    <property type="term" value="P:mitochondrial cytochrome c oxidase assembly"/>
    <property type="evidence" value="ECO:0000266"/>
    <property type="project" value="PomBase"/>
</dbReference>
<dbReference type="InterPro" id="IPR013892">
    <property type="entry name" value="Cyt_c_biogenesis_Cmc1-like"/>
</dbReference>
<dbReference type="Pfam" id="PF08583">
    <property type="entry name" value="Cmc1"/>
    <property type="match status" value="1"/>
</dbReference>
<dbReference type="PROSITE" id="PS51808">
    <property type="entry name" value="CHCH"/>
    <property type="match status" value="1"/>
</dbReference>
<sequence>MHPHLDVNNQKQCADLIRALEECHKSFGKFFGECNTIKYELKACLTKDRNDKARLNRENARMRKKVIEENRKKEEIEERILTDRILQQERKKSHANEGAGDNNN</sequence>
<proteinExistence type="inferred from homology"/>